<evidence type="ECO:0000255" key="1">
    <source>
        <dbReference type="HAMAP-Rule" id="MF_00367"/>
    </source>
</evidence>
<evidence type="ECO:0000255" key="2">
    <source>
        <dbReference type="PROSITE-ProRule" id="PRU01050"/>
    </source>
</evidence>
<gene>
    <name evidence="1" type="primary">era</name>
    <name type="ordered locus">SaurJH9_1625</name>
</gene>
<proteinExistence type="inferred from homology"/>
<feature type="chain" id="PRO_1000079743" description="GTPase Era">
    <location>
        <begin position="1"/>
        <end position="299"/>
    </location>
</feature>
<feature type="domain" description="Era-type G" evidence="2">
    <location>
        <begin position="5"/>
        <end position="172"/>
    </location>
</feature>
<feature type="domain" description="KH type-2" evidence="1">
    <location>
        <begin position="203"/>
        <end position="280"/>
    </location>
</feature>
<feature type="region of interest" description="G1" evidence="2">
    <location>
        <begin position="13"/>
        <end position="20"/>
    </location>
</feature>
<feature type="region of interest" description="G2" evidence="2">
    <location>
        <begin position="39"/>
        <end position="43"/>
    </location>
</feature>
<feature type="region of interest" description="G3" evidence="2">
    <location>
        <begin position="60"/>
        <end position="63"/>
    </location>
</feature>
<feature type="region of interest" description="G4" evidence="2">
    <location>
        <begin position="122"/>
        <end position="125"/>
    </location>
</feature>
<feature type="region of interest" description="G5" evidence="2">
    <location>
        <begin position="151"/>
        <end position="153"/>
    </location>
</feature>
<feature type="binding site" evidence="1">
    <location>
        <begin position="13"/>
        <end position="20"/>
    </location>
    <ligand>
        <name>GTP</name>
        <dbReference type="ChEBI" id="CHEBI:37565"/>
    </ligand>
</feature>
<feature type="binding site" evidence="1">
    <location>
        <begin position="60"/>
        <end position="64"/>
    </location>
    <ligand>
        <name>GTP</name>
        <dbReference type="ChEBI" id="CHEBI:37565"/>
    </ligand>
</feature>
<feature type="binding site" evidence="1">
    <location>
        <begin position="122"/>
        <end position="125"/>
    </location>
    <ligand>
        <name>GTP</name>
        <dbReference type="ChEBI" id="CHEBI:37565"/>
    </ligand>
</feature>
<reference key="1">
    <citation type="submission" date="2007-05" db="EMBL/GenBank/DDBJ databases">
        <title>Complete sequence of chromosome of Staphylococcus aureus subsp. aureus JH9.</title>
        <authorList>
            <consortium name="US DOE Joint Genome Institute"/>
            <person name="Copeland A."/>
            <person name="Lucas S."/>
            <person name="Lapidus A."/>
            <person name="Barry K."/>
            <person name="Detter J.C."/>
            <person name="Glavina del Rio T."/>
            <person name="Hammon N."/>
            <person name="Israni S."/>
            <person name="Pitluck S."/>
            <person name="Chain P."/>
            <person name="Malfatti S."/>
            <person name="Shin M."/>
            <person name="Vergez L."/>
            <person name="Schmutz J."/>
            <person name="Larimer F."/>
            <person name="Land M."/>
            <person name="Hauser L."/>
            <person name="Kyrpides N."/>
            <person name="Kim E."/>
            <person name="Tomasz A."/>
            <person name="Richardson P."/>
        </authorList>
    </citation>
    <scope>NUCLEOTIDE SEQUENCE [LARGE SCALE GENOMIC DNA]</scope>
    <source>
        <strain>JH9</strain>
    </source>
</reference>
<keyword id="KW-1003">Cell membrane</keyword>
<keyword id="KW-0963">Cytoplasm</keyword>
<keyword id="KW-0342">GTP-binding</keyword>
<keyword id="KW-0472">Membrane</keyword>
<keyword id="KW-0547">Nucleotide-binding</keyword>
<keyword id="KW-0690">Ribosome biogenesis</keyword>
<keyword id="KW-0694">RNA-binding</keyword>
<keyword id="KW-0699">rRNA-binding</keyword>
<protein>
    <recommendedName>
        <fullName evidence="1">GTPase Era</fullName>
    </recommendedName>
</protein>
<sequence length="299" mass="34329">MTEHKSGFVSIIGRPNVGKSTFVNRVIGHKIAIMSDKAQTTRNKIQGVMTRDDAQIIFIDTPGIHKPKHKLGDYMMKVAKNTLSEIDAIMFMVNANEEIGRGDEYIIEMLKNVKTPVFLVLNKIDLVHPDELMPKIEEYQSYMDFTEIVPISALEGLNVDHFIDVLKTYLPEGPKYYPDDQISDHPEQFVVGEIIREKILHLTSEEIPHAIGVNVDRMVKESEDRVHIEATIYVERDSQKGIVIGKGGKKLKEVGKRARRDIEMLLGSKVYLELWVKVQRDWRNKVNFIRQIGYVEDQD</sequence>
<dbReference type="EMBL" id="CP000703">
    <property type="protein sequence ID" value="ABQ49418.1"/>
    <property type="molecule type" value="Genomic_DNA"/>
</dbReference>
<dbReference type="RefSeq" id="WP_000134765.1">
    <property type="nucleotide sequence ID" value="NC_009487.1"/>
</dbReference>
<dbReference type="SMR" id="A5IT95"/>
<dbReference type="KEGG" id="saj:SaurJH9_1625"/>
<dbReference type="HOGENOM" id="CLU_038009_1_0_9"/>
<dbReference type="GO" id="GO:0005829">
    <property type="term" value="C:cytosol"/>
    <property type="evidence" value="ECO:0007669"/>
    <property type="project" value="TreeGrafter"/>
</dbReference>
<dbReference type="GO" id="GO:0005886">
    <property type="term" value="C:plasma membrane"/>
    <property type="evidence" value="ECO:0007669"/>
    <property type="project" value="UniProtKB-SubCell"/>
</dbReference>
<dbReference type="GO" id="GO:0005525">
    <property type="term" value="F:GTP binding"/>
    <property type="evidence" value="ECO:0007669"/>
    <property type="project" value="UniProtKB-UniRule"/>
</dbReference>
<dbReference type="GO" id="GO:0003924">
    <property type="term" value="F:GTPase activity"/>
    <property type="evidence" value="ECO:0007669"/>
    <property type="project" value="UniProtKB-UniRule"/>
</dbReference>
<dbReference type="GO" id="GO:0043024">
    <property type="term" value="F:ribosomal small subunit binding"/>
    <property type="evidence" value="ECO:0007669"/>
    <property type="project" value="TreeGrafter"/>
</dbReference>
<dbReference type="GO" id="GO:0070181">
    <property type="term" value="F:small ribosomal subunit rRNA binding"/>
    <property type="evidence" value="ECO:0007669"/>
    <property type="project" value="UniProtKB-UniRule"/>
</dbReference>
<dbReference type="GO" id="GO:0000028">
    <property type="term" value="P:ribosomal small subunit assembly"/>
    <property type="evidence" value="ECO:0007669"/>
    <property type="project" value="TreeGrafter"/>
</dbReference>
<dbReference type="CDD" id="cd04163">
    <property type="entry name" value="Era"/>
    <property type="match status" value="1"/>
</dbReference>
<dbReference type="CDD" id="cd22534">
    <property type="entry name" value="KH-II_Era"/>
    <property type="match status" value="1"/>
</dbReference>
<dbReference type="FunFam" id="3.30.300.20:FF:000003">
    <property type="entry name" value="GTPase Era"/>
    <property type="match status" value="1"/>
</dbReference>
<dbReference type="FunFam" id="3.40.50.300:FF:000094">
    <property type="entry name" value="GTPase Era"/>
    <property type="match status" value="1"/>
</dbReference>
<dbReference type="Gene3D" id="3.30.300.20">
    <property type="match status" value="1"/>
</dbReference>
<dbReference type="Gene3D" id="3.40.50.300">
    <property type="entry name" value="P-loop containing nucleotide triphosphate hydrolases"/>
    <property type="match status" value="1"/>
</dbReference>
<dbReference type="HAMAP" id="MF_00367">
    <property type="entry name" value="GTPase_Era"/>
    <property type="match status" value="1"/>
</dbReference>
<dbReference type="InterPro" id="IPR030388">
    <property type="entry name" value="G_ERA_dom"/>
</dbReference>
<dbReference type="InterPro" id="IPR006073">
    <property type="entry name" value="GTP-bd"/>
</dbReference>
<dbReference type="InterPro" id="IPR005662">
    <property type="entry name" value="GTPase_Era-like"/>
</dbReference>
<dbReference type="InterPro" id="IPR015946">
    <property type="entry name" value="KH_dom-like_a/b"/>
</dbReference>
<dbReference type="InterPro" id="IPR004044">
    <property type="entry name" value="KH_dom_type_2"/>
</dbReference>
<dbReference type="InterPro" id="IPR009019">
    <property type="entry name" value="KH_sf_prok-type"/>
</dbReference>
<dbReference type="InterPro" id="IPR027417">
    <property type="entry name" value="P-loop_NTPase"/>
</dbReference>
<dbReference type="InterPro" id="IPR005225">
    <property type="entry name" value="Small_GTP-bd"/>
</dbReference>
<dbReference type="NCBIfam" id="TIGR00436">
    <property type="entry name" value="era"/>
    <property type="match status" value="1"/>
</dbReference>
<dbReference type="NCBIfam" id="NF000908">
    <property type="entry name" value="PRK00089.1"/>
    <property type="match status" value="1"/>
</dbReference>
<dbReference type="NCBIfam" id="TIGR00231">
    <property type="entry name" value="small_GTP"/>
    <property type="match status" value="1"/>
</dbReference>
<dbReference type="PANTHER" id="PTHR42698">
    <property type="entry name" value="GTPASE ERA"/>
    <property type="match status" value="1"/>
</dbReference>
<dbReference type="PANTHER" id="PTHR42698:SF1">
    <property type="entry name" value="GTPASE ERA, MITOCHONDRIAL"/>
    <property type="match status" value="1"/>
</dbReference>
<dbReference type="Pfam" id="PF07650">
    <property type="entry name" value="KH_2"/>
    <property type="match status" value="1"/>
</dbReference>
<dbReference type="Pfam" id="PF01926">
    <property type="entry name" value="MMR_HSR1"/>
    <property type="match status" value="1"/>
</dbReference>
<dbReference type="SUPFAM" id="SSF52540">
    <property type="entry name" value="P-loop containing nucleoside triphosphate hydrolases"/>
    <property type="match status" value="1"/>
</dbReference>
<dbReference type="SUPFAM" id="SSF54814">
    <property type="entry name" value="Prokaryotic type KH domain (KH-domain type II)"/>
    <property type="match status" value="1"/>
</dbReference>
<dbReference type="PROSITE" id="PS51713">
    <property type="entry name" value="G_ERA"/>
    <property type="match status" value="1"/>
</dbReference>
<dbReference type="PROSITE" id="PS50823">
    <property type="entry name" value="KH_TYPE_2"/>
    <property type="match status" value="1"/>
</dbReference>
<organism>
    <name type="scientific">Staphylococcus aureus (strain JH9)</name>
    <dbReference type="NCBI Taxonomy" id="359786"/>
    <lineage>
        <taxon>Bacteria</taxon>
        <taxon>Bacillati</taxon>
        <taxon>Bacillota</taxon>
        <taxon>Bacilli</taxon>
        <taxon>Bacillales</taxon>
        <taxon>Staphylococcaceae</taxon>
        <taxon>Staphylococcus</taxon>
    </lineage>
</organism>
<accession>A5IT95</accession>
<comment type="function">
    <text evidence="1">An essential GTPase that binds both GDP and GTP, with rapid nucleotide exchange. Plays a role in 16S rRNA processing and 30S ribosomal subunit biogenesis and possibly also in cell cycle regulation and energy metabolism.</text>
</comment>
<comment type="subunit">
    <text evidence="1">Monomer.</text>
</comment>
<comment type="subcellular location">
    <subcellularLocation>
        <location>Cytoplasm</location>
    </subcellularLocation>
    <subcellularLocation>
        <location evidence="1">Cell membrane</location>
        <topology evidence="1">Peripheral membrane protein</topology>
    </subcellularLocation>
</comment>
<comment type="similarity">
    <text evidence="1 2">Belongs to the TRAFAC class TrmE-Era-EngA-EngB-Septin-like GTPase superfamily. Era GTPase family.</text>
</comment>
<name>ERA_STAA9</name>